<reference key="1">
    <citation type="journal article" date="2001" name="Nature">
        <title>Complete genome sequence of a multiple drug resistant Salmonella enterica serovar Typhi CT18.</title>
        <authorList>
            <person name="Parkhill J."/>
            <person name="Dougan G."/>
            <person name="James K.D."/>
            <person name="Thomson N.R."/>
            <person name="Pickard D."/>
            <person name="Wain J."/>
            <person name="Churcher C.M."/>
            <person name="Mungall K.L."/>
            <person name="Bentley S.D."/>
            <person name="Holden M.T.G."/>
            <person name="Sebaihia M."/>
            <person name="Baker S."/>
            <person name="Basham D."/>
            <person name="Brooks K."/>
            <person name="Chillingworth T."/>
            <person name="Connerton P."/>
            <person name="Cronin A."/>
            <person name="Davis P."/>
            <person name="Davies R.M."/>
            <person name="Dowd L."/>
            <person name="White N."/>
            <person name="Farrar J."/>
            <person name="Feltwell T."/>
            <person name="Hamlin N."/>
            <person name="Haque A."/>
            <person name="Hien T.T."/>
            <person name="Holroyd S."/>
            <person name="Jagels K."/>
            <person name="Krogh A."/>
            <person name="Larsen T.S."/>
            <person name="Leather S."/>
            <person name="Moule S."/>
            <person name="O'Gaora P."/>
            <person name="Parry C."/>
            <person name="Quail M.A."/>
            <person name="Rutherford K.M."/>
            <person name="Simmonds M."/>
            <person name="Skelton J."/>
            <person name="Stevens K."/>
            <person name="Whitehead S."/>
            <person name="Barrell B.G."/>
        </authorList>
    </citation>
    <scope>NUCLEOTIDE SEQUENCE [LARGE SCALE GENOMIC DNA]</scope>
    <source>
        <strain>CT18</strain>
    </source>
</reference>
<reference key="2">
    <citation type="journal article" date="2003" name="J. Bacteriol.">
        <title>Comparative genomics of Salmonella enterica serovar Typhi strains Ty2 and CT18.</title>
        <authorList>
            <person name="Deng W."/>
            <person name="Liou S.-R."/>
            <person name="Plunkett G. III"/>
            <person name="Mayhew G.F."/>
            <person name="Rose D.J."/>
            <person name="Burland V."/>
            <person name="Kodoyianni V."/>
            <person name="Schwartz D.C."/>
            <person name="Blattner F.R."/>
        </authorList>
    </citation>
    <scope>NUCLEOTIDE SEQUENCE [LARGE SCALE GENOMIC DNA]</scope>
    <source>
        <strain>ATCC 700931 / Ty2</strain>
    </source>
</reference>
<gene>
    <name evidence="1" type="primary">ycdX</name>
    <name type="ordered locus">STY1173</name>
    <name type="ordered locus">t1784</name>
</gene>
<feature type="chain" id="PRO_0000228698" description="Probable phosphatase YcdX">
    <location>
        <begin position="1"/>
        <end position="245"/>
    </location>
</feature>
<feature type="binding site" evidence="1">
    <location>
        <position position="7"/>
    </location>
    <ligand>
        <name>Zn(2+)</name>
        <dbReference type="ChEBI" id="CHEBI:29105"/>
        <label>1</label>
    </ligand>
</feature>
<feature type="binding site" evidence="1">
    <location>
        <position position="9"/>
    </location>
    <ligand>
        <name>Zn(2+)</name>
        <dbReference type="ChEBI" id="CHEBI:29105"/>
        <label>1</label>
    </ligand>
</feature>
<feature type="binding site" evidence="1">
    <location>
        <position position="15"/>
    </location>
    <ligand>
        <name>Zn(2+)</name>
        <dbReference type="ChEBI" id="CHEBI:29105"/>
        <label>2</label>
    </ligand>
</feature>
<feature type="binding site" evidence="1">
    <location>
        <position position="40"/>
    </location>
    <ligand>
        <name>Zn(2+)</name>
        <dbReference type="ChEBI" id="CHEBI:29105"/>
        <label>2</label>
    </ligand>
</feature>
<feature type="binding site" evidence="1">
    <location>
        <position position="73"/>
    </location>
    <ligand>
        <name>Zn(2+)</name>
        <dbReference type="ChEBI" id="CHEBI:29105"/>
        <label>1</label>
    </ligand>
</feature>
<feature type="binding site" evidence="1">
    <location>
        <position position="73"/>
    </location>
    <ligand>
        <name>Zn(2+)</name>
        <dbReference type="ChEBI" id="CHEBI:29105"/>
        <label>3</label>
    </ligand>
</feature>
<feature type="binding site" evidence="1">
    <location>
        <position position="101"/>
    </location>
    <ligand>
        <name>Zn(2+)</name>
        <dbReference type="ChEBI" id="CHEBI:29105"/>
        <label>3</label>
    </ligand>
</feature>
<feature type="binding site" evidence="1">
    <location>
        <position position="131"/>
    </location>
    <ligand>
        <name>Zn(2+)</name>
        <dbReference type="ChEBI" id="CHEBI:29105"/>
        <label>3</label>
    </ligand>
</feature>
<feature type="binding site" evidence="1">
    <location>
        <position position="192"/>
    </location>
    <ligand>
        <name>Zn(2+)</name>
        <dbReference type="ChEBI" id="CHEBI:29105"/>
        <label>1</label>
    </ligand>
</feature>
<feature type="binding site" evidence="1">
    <location>
        <position position="194"/>
    </location>
    <ligand>
        <name>Zn(2+)</name>
        <dbReference type="ChEBI" id="CHEBI:29105"/>
        <label>2</label>
    </ligand>
</feature>
<dbReference type="EC" id="3.1.3.-" evidence="1"/>
<dbReference type="EMBL" id="AL513382">
    <property type="protein sequence ID" value="CAD08260.1"/>
    <property type="molecule type" value="Genomic_DNA"/>
</dbReference>
<dbReference type="EMBL" id="AE014613">
    <property type="protein sequence ID" value="AAO69407.1"/>
    <property type="molecule type" value="Genomic_DNA"/>
</dbReference>
<dbReference type="RefSeq" id="NP_455630.1">
    <property type="nucleotide sequence ID" value="NC_003198.1"/>
</dbReference>
<dbReference type="RefSeq" id="WP_000283643.1">
    <property type="nucleotide sequence ID" value="NZ_WSUR01000018.1"/>
</dbReference>
<dbReference type="SMR" id="Q8XGW8"/>
<dbReference type="STRING" id="220341.gene:17585140"/>
<dbReference type="KEGG" id="stt:t1784"/>
<dbReference type="KEGG" id="sty:STY1173"/>
<dbReference type="PATRIC" id="fig|220341.7.peg.1173"/>
<dbReference type="eggNOG" id="COG1387">
    <property type="taxonomic scope" value="Bacteria"/>
</dbReference>
<dbReference type="HOGENOM" id="CLU_061999_0_1_6"/>
<dbReference type="OMA" id="SEPNCRA"/>
<dbReference type="OrthoDB" id="9808747at2"/>
<dbReference type="Proteomes" id="UP000000541">
    <property type="component" value="Chromosome"/>
</dbReference>
<dbReference type="Proteomes" id="UP000002670">
    <property type="component" value="Chromosome"/>
</dbReference>
<dbReference type="GO" id="GO:0005829">
    <property type="term" value="C:cytosol"/>
    <property type="evidence" value="ECO:0007669"/>
    <property type="project" value="TreeGrafter"/>
</dbReference>
<dbReference type="GO" id="GO:0016791">
    <property type="term" value="F:phosphatase activity"/>
    <property type="evidence" value="ECO:0007669"/>
    <property type="project" value="UniProtKB-UniRule"/>
</dbReference>
<dbReference type="GO" id="GO:0008270">
    <property type="term" value="F:zinc ion binding"/>
    <property type="evidence" value="ECO:0007669"/>
    <property type="project" value="UniProtKB-UniRule"/>
</dbReference>
<dbReference type="GO" id="GO:0071978">
    <property type="term" value="P:bacterial-type flagellum-dependent swarming motility"/>
    <property type="evidence" value="ECO:0007669"/>
    <property type="project" value="TreeGrafter"/>
</dbReference>
<dbReference type="CDD" id="cd07437">
    <property type="entry name" value="PHP_HisPPase_Ycdx_like"/>
    <property type="match status" value="1"/>
</dbReference>
<dbReference type="FunFam" id="3.20.20.140:FF:000008">
    <property type="entry name" value="Probable phosphatase YcdX"/>
    <property type="match status" value="1"/>
</dbReference>
<dbReference type="Gene3D" id="3.20.20.140">
    <property type="entry name" value="Metal-dependent hydrolases"/>
    <property type="match status" value="1"/>
</dbReference>
<dbReference type="HAMAP" id="MF_01561">
    <property type="entry name" value="YcdX_phosphat"/>
    <property type="match status" value="1"/>
</dbReference>
<dbReference type="InterPro" id="IPR023710">
    <property type="entry name" value="Phosphatase_YcdX_put"/>
</dbReference>
<dbReference type="InterPro" id="IPR004013">
    <property type="entry name" value="PHP_dom"/>
</dbReference>
<dbReference type="InterPro" id="IPR050243">
    <property type="entry name" value="PHP_phosphatase"/>
</dbReference>
<dbReference type="InterPro" id="IPR003141">
    <property type="entry name" value="Pol/His_phosphatase_N"/>
</dbReference>
<dbReference type="InterPro" id="IPR016195">
    <property type="entry name" value="Pol/histidinol_Pase-like"/>
</dbReference>
<dbReference type="NCBIfam" id="NF006702">
    <property type="entry name" value="PRK09248.1"/>
    <property type="match status" value="1"/>
</dbReference>
<dbReference type="PANTHER" id="PTHR36928">
    <property type="entry name" value="PHOSPHATASE YCDX-RELATED"/>
    <property type="match status" value="1"/>
</dbReference>
<dbReference type="PANTHER" id="PTHR36928:SF1">
    <property type="entry name" value="PHOSPHATASE YCDX-RELATED"/>
    <property type="match status" value="1"/>
</dbReference>
<dbReference type="Pfam" id="PF02811">
    <property type="entry name" value="PHP"/>
    <property type="match status" value="1"/>
</dbReference>
<dbReference type="SMART" id="SM00481">
    <property type="entry name" value="POLIIIAc"/>
    <property type="match status" value="1"/>
</dbReference>
<dbReference type="SUPFAM" id="SSF89550">
    <property type="entry name" value="PHP domain-like"/>
    <property type="match status" value="1"/>
</dbReference>
<keyword id="KW-0378">Hydrolase</keyword>
<keyword id="KW-0479">Metal-binding</keyword>
<keyword id="KW-0862">Zinc</keyword>
<evidence type="ECO:0000255" key="1">
    <source>
        <dbReference type="HAMAP-Rule" id="MF_01561"/>
    </source>
</evidence>
<proteinExistence type="inferred from homology"/>
<sequence>MYPVDLHMHTVASTHAYSTLSDYIAEAKRKGIKLFAITDHGPDMEDAPHHWHFINMRIWPRLVDGVGILRGIEANIKNINGEIDCSGKMFDSLDLIIAGFHEPVFAPHDKETNTQAMIATIASGKVHIISHPGNPKYPVEVKAIAQAAAKHHVALEINNSSFLHSRKGSEDNCRAVAAAVRDAGGWVALGSDSHTAFTLGDFTECRKILDAVNFPEDRILNVSPQRLLAFLESRGMAPVPEFAEL</sequence>
<name>YCDX_SALTI</name>
<organism>
    <name type="scientific">Salmonella typhi</name>
    <dbReference type="NCBI Taxonomy" id="90370"/>
    <lineage>
        <taxon>Bacteria</taxon>
        <taxon>Pseudomonadati</taxon>
        <taxon>Pseudomonadota</taxon>
        <taxon>Gammaproteobacteria</taxon>
        <taxon>Enterobacterales</taxon>
        <taxon>Enterobacteriaceae</taxon>
        <taxon>Salmonella</taxon>
    </lineage>
</organism>
<protein>
    <recommendedName>
        <fullName evidence="1">Probable phosphatase YcdX</fullName>
        <ecNumber evidence="1">3.1.3.-</ecNumber>
    </recommendedName>
</protein>
<accession>Q8XGW8</accession>
<accession>Q7AN19</accession>
<comment type="cofactor">
    <cofactor evidence="1">
        <name>Zn(2+)</name>
        <dbReference type="ChEBI" id="CHEBI:29105"/>
    </cofactor>
    <text evidence="1">Binds 3 Zn(2+) ions per subunit.</text>
</comment>
<comment type="subunit">
    <text evidence="1">Homotrimer.</text>
</comment>
<comment type="similarity">
    <text evidence="1">Belongs to the PHP family.</text>
</comment>